<organism>
    <name type="scientific">Yarrowia lipolytica (strain CLIB 122 / E 150)</name>
    <name type="common">Yeast</name>
    <name type="synonym">Candida lipolytica</name>
    <dbReference type="NCBI Taxonomy" id="284591"/>
    <lineage>
        <taxon>Eukaryota</taxon>
        <taxon>Fungi</taxon>
        <taxon>Dikarya</taxon>
        <taxon>Ascomycota</taxon>
        <taxon>Saccharomycotina</taxon>
        <taxon>Dipodascomycetes</taxon>
        <taxon>Dipodascales</taxon>
        <taxon>Dipodascales incertae sedis</taxon>
        <taxon>Yarrowia</taxon>
    </lineage>
</organism>
<comment type="function">
    <text evidence="2">Glycogen-branching enzyme participates in the glycogen biosynthetic process along with glycogenin and glycogen synthase. Generates alpha-1,6-glucosidic branches from alpha-1,4-linked glucose chains, to increase solubility of the glycogen polymer.</text>
</comment>
<comment type="catalytic activity">
    <reaction evidence="2">
        <text>Transfers a segment of a (1-&gt;4)-alpha-D-glucan chain to a primary hydroxy group in a similar glucan chain.</text>
        <dbReference type="EC" id="2.4.1.18"/>
    </reaction>
</comment>
<comment type="pathway">
    <text evidence="2">Glycan biosynthesis; glycogen biosynthesis.</text>
</comment>
<comment type="subcellular location">
    <subcellularLocation>
        <location evidence="1">Cytoplasm</location>
    </subcellularLocation>
    <text evidence="1">Localizes to glycogen granules in the cytoplasm.</text>
</comment>
<comment type="similarity">
    <text evidence="4">Belongs to the glycosyl hydrolase 13 family. GlgB subfamily.</text>
</comment>
<sequence>MTLQVCKDDPWLKPFEEELLRRQALVGQWKDHFAKEGGLAEFAASYKRYGLHVNKDNSVTYREWAPGASEAVLTGDFNGWDRQQYHMTRDEYGLWSVTVPPTSDGQVAIPHNSKVKLALKTSNGQWVDRLPAWSTYVVQDLSKSPIYEAVFWNPPESEKYQWKNKSPPTPANAQIYEAHVGISSSEPRVGTYKEFTKNILPRIHKLGYNVIQLMAIMEHAYYASFGYQVTSFYAISSRYGTPEDLKELIDTAHGMGITVLLDVVHSHACKNVDDGLNNFDGTDHQYFHGGAKGDHPQWDSKLFDYGKYEVLRFLLSNLRFYIEEYHFDGFRFDGVTSMLYKHHGLGTGFSGGYHEYFGDEHVDQQAVVYLMLAHELMRELQPLLRPGEDAGNFLSIAEDVSGMPALCRPVSEGGVGFDYRLAMAIPDMWIKLVKETRDEDWDMGNIVFTLTNRRHREKTIAYAESHDQALVGDKTLAFWLMDKEMYTSMSVLSDPNPIIDRGIALHKMIRLITHSLGGEGYLNFEGNEFGHPEWLDFPREGNGSSFHYCRRQWPVVDDKLLRYQHLNEFDAAMQHRGDHYGWLSADQAYVSLKNEDDKVVVYERAGLVFVFNFHPNKSFTDYRIGVDQPGTYTLVLDSDSPEFGGFGRIDHEKTRCHTEPLEWNGRANCMHIYIPSRVALVFAREDDPRRK</sequence>
<protein>
    <recommendedName>
        <fullName>1,4-alpha-glucan-branching enzyme</fullName>
        <ecNumber evidence="2">2.4.1.18</ecNumber>
    </recommendedName>
    <alternativeName>
        <fullName>Glycogen-branching enzyme</fullName>
    </alternativeName>
</protein>
<feature type="chain" id="PRO_0000188785" description="1,4-alpha-glucan-branching enzyme">
    <location>
        <begin position="1"/>
        <end position="691"/>
    </location>
</feature>
<feature type="active site" description="Nucleophile" evidence="2">
    <location>
        <position position="333"/>
    </location>
</feature>
<feature type="active site" description="Proton donor" evidence="2">
    <location>
        <position position="398"/>
    </location>
</feature>
<feature type="binding site" evidence="3">
    <location>
        <position position="80"/>
    </location>
    <ligand>
        <name>(1,4-alpha-D-glucosyl)n</name>
        <dbReference type="ChEBI" id="CHEBI:15444"/>
    </ligand>
</feature>
<feature type="binding site" evidence="3">
    <location>
        <position position="116"/>
    </location>
    <ligand>
        <name>(1,4-alpha-D-glucosyl)n</name>
        <dbReference type="ChEBI" id="CHEBI:15444"/>
    </ligand>
</feature>
<feature type="site" description="Transition state stabilizer" evidence="2">
    <location>
        <position position="467"/>
    </location>
</feature>
<keyword id="KW-0963">Cytoplasm</keyword>
<keyword id="KW-0320">Glycogen biosynthesis</keyword>
<keyword id="KW-0328">Glycosyltransferase</keyword>
<keyword id="KW-1185">Reference proteome</keyword>
<keyword id="KW-0808">Transferase</keyword>
<gene>
    <name type="primary">GLC3</name>
    <name type="ordered locus">YALI0C06798g</name>
</gene>
<evidence type="ECO:0000250" key="1">
    <source>
        <dbReference type="UniProtKB" id="P32775"/>
    </source>
</evidence>
<evidence type="ECO:0000250" key="2">
    <source>
        <dbReference type="UniProtKB" id="Q04446"/>
    </source>
</evidence>
<evidence type="ECO:0000250" key="3">
    <source>
        <dbReference type="UniProtKB" id="Q6FJV0"/>
    </source>
</evidence>
<evidence type="ECO:0000305" key="4"/>
<accession>Q6CCT1</accession>
<reference key="1">
    <citation type="journal article" date="2004" name="Nature">
        <title>Genome evolution in yeasts.</title>
        <authorList>
            <person name="Dujon B."/>
            <person name="Sherman D."/>
            <person name="Fischer G."/>
            <person name="Durrens P."/>
            <person name="Casaregola S."/>
            <person name="Lafontaine I."/>
            <person name="de Montigny J."/>
            <person name="Marck C."/>
            <person name="Neuveglise C."/>
            <person name="Talla E."/>
            <person name="Goffard N."/>
            <person name="Frangeul L."/>
            <person name="Aigle M."/>
            <person name="Anthouard V."/>
            <person name="Babour A."/>
            <person name="Barbe V."/>
            <person name="Barnay S."/>
            <person name="Blanchin S."/>
            <person name="Beckerich J.-M."/>
            <person name="Beyne E."/>
            <person name="Bleykasten C."/>
            <person name="Boisrame A."/>
            <person name="Boyer J."/>
            <person name="Cattolico L."/>
            <person name="Confanioleri F."/>
            <person name="de Daruvar A."/>
            <person name="Despons L."/>
            <person name="Fabre E."/>
            <person name="Fairhead C."/>
            <person name="Ferry-Dumazet H."/>
            <person name="Groppi A."/>
            <person name="Hantraye F."/>
            <person name="Hennequin C."/>
            <person name="Jauniaux N."/>
            <person name="Joyet P."/>
            <person name="Kachouri R."/>
            <person name="Kerrest A."/>
            <person name="Koszul R."/>
            <person name="Lemaire M."/>
            <person name="Lesur I."/>
            <person name="Ma L."/>
            <person name="Muller H."/>
            <person name="Nicaud J.-M."/>
            <person name="Nikolski M."/>
            <person name="Oztas S."/>
            <person name="Ozier-Kalogeropoulos O."/>
            <person name="Pellenz S."/>
            <person name="Potier S."/>
            <person name="Richard G.-F."/>
            <person name="Straub M.-L."/>
            <person name="Suleau A."/>
            <person name="Swennen D."/>
            <person name="Tekaia F."/>
            <person name="Wesolowski-Louvel M."/>
            <person name="Westhof E."/>
            <person name="Wirth B."/>
            <person name="Zeniou-Meyer M."/>
            <person name="Zivanovic Y."/>
            <person name="Bolotin-Fukuhara M."/>
            <person name="Thierry A."/>
            <person name="Bouchier C."/>
            <person name="Caudron B."/>
            <person name="Scarpelli C."/>
            <person name="Gaillardin C."/>
            <person name="Weissenbach J."/>
            <person name="Wincker P."/>
            <person name="Souciet J.-L."/>
        </authorList>
    </citation>
    <scope>NUCLEOTIDE SEQUENCE [LARGE SCALE GENOMIC DNA]</scope>
    <source>
        <strain>CLIB 122 / E 150</strain>
    </source>
</reference>
<dbReference type="EC" id="2.4.1.18" evidence="2"/>
<dbReference type="EMBL" id="CR382129">
    <property type="protein sequence ID" value="CAG81834.1"/>
    <property type="molecule type" value="Genomic_DNA"/>
</dbReference>
<dbReference type="RefSeq" id="XP_501531.1">
    <property type="nucleotide sequence ID" value="XM_501531.1"/>
</dbReference>
<dbReference type="SMR" id="Q6CCT1"/>
<dbReference type="FunCoup" id="Q6CCT1">
    <property type="interactions" value="463"/>
</dbReference>
<dbReference type="STRING" id="284591.Q6CCT1"/>
<dbReference type="CAZy" id="GH13">
    <property type="family name" value="Glycoside Hydrolase Family 13"/>
</dbReference>
<dbReference type="EnsemblFungi" id="CAG81834">
    <property type="protein sequence ID" value="CAG81834"/>
    <property type="gene ID" value="YALI0_C06798g"/>
</dbReference>
<dbReference type="KEGG" id="yli:2909223"/>
<dbReference type="VEuPathDB" id="FungiDB:YALI0_C06798g"/>
<dbReference type="HOGENOM" id="CLU_011131_2_2_1"/>
<dbReference type="InParanoid" id="Q6CCT1"/>
<dbReference type="OMA" id="YEMHLGS"/>
<dbReference type="OrthoDB" id="69921at4891"/>
<dbReference type="UniPathway" id="UPA00164"/>
<dbReference type="Proteomes" id="UP000001300">
    <property type="component" value="Chromosome C"/>
</dbReference>
<dbReference type="GO" id="GO:0005737">
    <property type="term" value="C:cytoplasm"/>
    <property type="evidence" value="ECO:0000250"/>
    <property type="project" value="UniProtKB"/>
</dbReference>
<dbReference type="GO" id="GO:0003844">
    <property type="term" value="F:1,4-alpha-glucan branching enzyme activity"/>
    <property type="evidence" value="ECO:0000318"/>
    <property type="project" value="GO_Central"/>
</dbReference>
<dbReference type="GO" id="GO:0043169">
    <property type="term" value="F:cation binding"/>
    <property type="evidence" value="ECO:0007669"/>
    <property type="project" value="InterPro"/>
</dbReference>
<dbReference type="GO" id="GO:0004553">
    <property type="term" value="F:hydrolase activity, hydrolyzing O-glycosyl compounds"/>
    <property type="evidence" value="ECO:0007669"/>
    <property type="project" value="InterPro"/>
</dbReference>
<dbReference type="GO" id="GO:0005978">
    <property type="term" value="P:glycogen biosynthetic process"/>
    <property type="evidence" value="ECO:0000318"/>
    <property type="project" value="GO_Central"/>
</dbReference>
<dbReference type="CDD" id="cd11321">
    <property type="entry name" value="AmyAc_bac_euk_BE"/>
    <property type="match status" value="1"/>
</dbReference>
<dbReference type="CDD" id="cd02854">
    <property type="entry name" value="E_set_GBE_euk_N"/>
    <property type="match status" value="1"/>
</dbReference>
<dbReference type="FunFam" id="3.20.20.80:FF:000001">
    <property type="entry name" value="1,4-alpha-glucan branching enzyme"/>
    <property type="match status" value="1"/>
</dbReference>
<dbReference type="FunFam" id="2.60.40.10:FF:000250">
    <property type="entry name" value="1,4-alpha-glucan-branching enzyme, chloroplastic/amyloplastic"/>
    <property type="match status" value="1"/>
</dbReference>
<dbReference type="FunFam" id="2.60.40.1180:FF:000003">
    <property type="entry name" value="1,4-alpha-glucan-branching enzyme, chloroplastic/amyloplastic"/>
    <property type="match status" value="1"/>
</dbReference>
<dbReference type="Gene3D" id="3.20.20.80">
    <property type="entry name" value="Glycosidases"/>
    <property type="match status" value="1"/>
</dbReference>
<dbReference type="Gene3D" id="2.60.40.1180">
    <property type="entry name" value="Golgi alpha-mannosidase II"/>
    <property type="match status" value="1"/>
</dbReference>
<dbReference type="Gene3D" id="2.60.40.10">
    <property type="entry name" value="Immunoglobulins"/>
    <property type="match status" value="1"/>
</dbReference>
<dbReference type="InterPro" id="IPR006048">
    <property type="entry name" value="A-amylase/branching_C"/>
</dbReference>
<dbReference type="InterPro" id="IPR037439">
    <property type="entry name" value="Branching_enzy"/>
</dbReference>
<dbReference type="InterPro" id="IPR006047">
    <property type="entry name" value="Glyco_hydro_13_cat_dom"/>
</dbReference>
<dbReference type="InterPro" id="IPR004193">
    <property type="entry name" value="Glyco_hydro_13_N"/>
</dbReference>
<dbReference type="InterPro" id="IPR013780">
    <property type="entry name" value="Glyco_hydro_b"/>
</dbReference>
<dbReference type="InterPro" id="IPR017853">
    <property type="entry name" value="Glycoside_hydrolase_SF"/>
</dbReference>
<dbReference type="InterPro" id="IPR013783">
    <property type="entry name" value="Ig-like_fold"/>
</dbReference>
<dbReference type="InterPro" id="IPR014756">
    <property type="entry name" value="Ig_E-set"/>
</dbReference>
<dbReference type="PANTHER" id="PTHR43651">
    <property type="entry name" value="1,4-ALPHA-GLUCAN-BRANCHING ENZYME"/>
    <property type="match status" value="1"/>
</dbReference>
<dbReference type="PANTHER" id="PTHR43651:SF3">
    <property type="entry name" value="1,4-ALPHA-GLUCAN-BRANCHING ENZYME"/>
    <property type="match status" value="1"/>
</dbReference>
<dbReference type="Pfam" id="PF00128">
    <property type="entry name" value="Alpha-amylase"/>
    <property type="match status" value="1"/>
</dbReference>
<dbReference type="Pfam" id="PF02806">
    <property type="entry name" value="Alpha-amylase_C"/>
    <property type="match status" value="1"/>
</dbReference>
<dbReference type="Pfam" id="PF02922">
    <property type="entry name" value="CBM_48"/>
    <property type="match status" value="1"/>
</dbReference>
<dbReference type="PIRSF" id="PIRSF000463">
    <property type="entry name" value="GlgB"/>
    <property type="match status" value="1"/>
</dbReference>
<dbReference type="SMART" id="SM00642">
    <property type="entry name" value="Aamy"/>
    <property type="match status" value="1"/>
</dbReference>
<dbReference type="SUPFAM" id="SSF51445">
    <property type="entry name" value="(Trans)glycosidases"/>
    <property type="match status" value="1"/>
</dbReference>
<dbReference type="SUPFAM" id="SSF81296">
    <property type="entry name" value="E set domains"/>
    <property type="match status" value="1"/>
</dbReference>
<dbReference type="SUPFAM" id="SSF51011">
    <property type="entry name" value="Glycosyl hydrolase domain"/>
    <property type="match status" value="1"/>
</dbReference>
<proteinExistence type="inferred from homology"/>
<name>GLGB_YARLI</name>